<feature type="signal peptide" evidence="2">
    <location>
        <begin position="1"/>
        <end position="24"/>
    </location>
</feature>
<feature type="chain" id="PRO_0000017256" description="Putative defensin-like protein 137">
    <location>
        <begin position="25"/>
        <end position="79"/>
    </location>
</feature>
<feature type="disulfide bond" evidence="1">
    <location>
        <begin position="33"/>
        <end position="78"/>
    </location>
</feature>
<feature type="disulfide bond" evidence="1">
    <location>
        <begin position="42"/>
        <end position="62"/>
    </location>
</feature>
<feature type="disulfide bond" evidence="1">
    <location>
        <begin position="47"/>
        <end position="72"/>
    </location>
</feature>
<feature type="disulfide bond" evidence="1">
    <location>
        <begin position="51"/>
        <end position="74"/>
    </location>
</feature>
<accession>P82729</accession>
<gene>
    <name type="primary">LCR14</name>
    <name type="ordered locus">At2g25344</name>
    <name type="ORF">F13B15</name>
</gene>
<name>DF137_ARATH</name>
<proteinExistence type="inferred from homology"/>
<dbReference type="EMBL" id="AC006300">
    <property type="status" value="NOT_ANNOTATED_CDS"/>
    <property type="molecule type" value="Genomic_DNA"/>
</dbReference>
<dbReference type="EMBL" id="CP002685">
    <property type="protein sequence ID" value="AEC07691.1"/>
    <property type="molecule type" value="Genomic_DNA"/>
</dbReference>
<dbReference type="RefSeq" id="NP_001031413.1">
    <property type="nucleotide sequence ID" value="NM_001036336.2"/>
</dbReference>
<dbReference type="SMR" id="P82729"/>
<dbReference type="STRING" id="3702.P82729"/>
<dbReference type="PaxDb" id="3702-AT2G25344.1"/>
<dbReference type="EnsemblPlants" id="AT2G25344.1">
    <property type="protein sequence ID" value="AT2G25344.1"/>
    <property type="gene ID" value="AT2G25344"/>
</dbReference>
<dbReference type="GeneID" id="3767750"/>
<dbReference type="Gramene" id="AT2G25344.1">
    <property type="protein sequence ID" value="AT2G25344.1"/>
    <property type="gene ID" value="AT2G25344"/>
</dbReference>
<dbReference type="KEGG" id="ath:AT2G25344"/>
<dbReference type="Araport" id="AT2G25344"/>
<dbReference type="TAIR" id="AT2G25344">
    <property type="gene designation" value="LCR14"/>
</dbReference>
<dbReference type="HOGENOM" id="CLU_182511_0_0_1"/>
<dbReference type="InParanoid" id="P82729"/>
<dbReference type="OMA" id="GRIICLC"/>
<dbReference type="PhylomeDB" id="P82729"/>
<dbReference type="PRO" id="PR:P82729"/>
<dbReference type="Proteomes" id="UP000006548">
    <property type="component" value="Chromosome 2"/>
</dbReference>
<dbReference type="ExpressionAtlas" id="P82729">
    <property type="expression patterns" value="baseline"/>
</dbReference>
<dbReference type="GO" id="GO:0005576">
    <property type="term" value="C:extracellular region"/>
    <property type="evidence" value="ECO:0007669"/>
    <property type="project" value="UniProtKB-SubCell"/>
</dbReference>
<dbReference type="GO" id="GO:0050832">
    <property type="term" value="P:defense response to fungus"/>
    <property type="evidence" value="ECO:0007669"/>
    <property type="project" value="UniProtKB-KW"/>
</dbReference>
<dbReference type="GO" id="GO:0031640">
    <property type="term" value="P:killing of cells of another organism"/>
    <property type="evidence" value="ECO:0007669"/>
    <property type="project" value="UniProtKB-KW"/>
</dbReference>
<dbReference type="InterPro" id="IPR010851">
    <property type="entry name" value="DEFL"/>
</dbReference>
<dbReference type="PANTHER" id="PTHR33830:SF38">
    <property type="entry name" value="DEFENSIN-LIKE PROTEIN 153-RELATED"/>
    <property type="match status" value="1"/>
</dbReference>
<dbReference type="PANTHER" id="PTHR33830">
    <property type="entry name" value="DEFENSIN-LIKE PROTEIN 184-RELATED"/>
    <property type="match status" value="1"/>
</dbReference>
<dbReference type="Pfam" id="PF07333">
    <property type="entry name" value="SLR1-BP"/>
    <property type="match status" value="1"/>
</dbReference>
<organism evidence="3">
    <name type="scientific">Arabidopsis thaliana</name>
    <name type="common">Mouse-ear cress</name>
    <dbReference type="NCBI Taxonomy" id="3702"/>
    <lineage>
        <taxon>Eukaryota</taxon>
        <taxon>Viridiplantae</taxon>
        <taxon>Streptophyta</taxon>
        <taxon>Embryophyta</taxon>
        <taxon>Tracheophyta</taxon>
        <taxon>Spermatophyta</taxon>
        <taxon>Magnoliopsida</taxon>
        <taxon>eudicotyledons</taxon>
        <taxon>Gunneridae</taxon>
        <taxon>Pentapetalae</taxon>
        <taxon>rosids</taxon>
        <taxon>malvids</taxon>
        <taxon>Brassicales</taxon>
        <taxon>Brassicaceae</taxon>
        <taxon>Camelineae</taxon>
        <taxon>Arabidopsis</taxon>
    </lineage>
</organism>
<evidence type="ECO:0000250" key="1"/>
<evidence type="ECO:0000255" key="2"/>
<evidence type="ECO:0000305" key="3"/>
<keyword id="KW-0929">Antimicrobial</keyword>
<keyword id="KW-1015">Disulfide bond</keyword>
<keyword id="KW-0295">Fungicide</keyword>
<keyword id="KW-0611">Plant defense</keyword>
<keyword id="KW-1185">Reference proteome</keyword>
<keyword id="KW-0964">Secreted</keyword>
<keyword id="KW-0732">Signal</keyword>
<reference evidence="3" key="1">
    <citation type="journal article" date="1999" name="Nature">
        <title>Sequence and analysis of chromosome 2 of the plant Arabidopsis thaliana.</title>
        <authorList>
            <person name="Lin X."/>
            <person name="Kaul S."/>
            <person name="Rounsley S.D."/>
            <person name="Shea T.P."/>
            <person name="Benito M.-I."/>
            <person name="Town C.D."/>
            <person name="Fujii C.Y."/>
            <person name="Mason T.M."/>
            <person name="Bowman C.L."/>
            <person name="Barnstead M.E."/>
            <person name="Feldblyum T.V."/>
            <person name="Buell C.R."/>
            <person name="Ketchum K.A."/>
            <person name="Lee J.J."/>
            <person name="Ronning C.M."/>
            <person name="Koo H.L."/>
            <person name="Moffat K.S."/>
            <person name="Cronin L.A."/>
            <person name="Shen M."/>
            <person name="Pai G."/>
            <person name="Van Aken S."/>
            <person name="Umayam L."/>
            <person name="Tallon L.J."/>
            <person name="Gill J.E."/>
            <person name="Adams M.D."/>
            <person name="Carrera A.J."/>
            <person name="Creasy T.H."/>
            <person name="Goodman H.M."/>
            <person name="Somerville C.R."/>
            <person name="Copenhaver G.P."/>
            <person name="Preuss D."/>
            <person name="Nierman W.C."/>
            <person name="White O."/>
            <person name="Eisen J.A."/>
            <person name="Salzberg S.L."/>
            <person name="Fraser C.M."/>
            <person name="Venter J.C."/>
        </authorList>
    </citation>
    <scope>NUCLEOTIDE SEQUENCE [LARGE SCALE GENOMIC DNA]</scope>
    <source>
        <strain>cv. Columbia</strain>
    </source>
</reference>
<reference key="2">
    <citation type="journal article" date="2017" name="Plant J.">
        <title>Araport11: a complete reannotation of the Arabidopsis thaliana reference genome.</title>
        <authorList>
            <person name="Cheng C.Y."/>
            <person name="Krishnakumar V."/>
            <person name="Chan A.P."/>
            <person name="Thibaud-Nissen F."/>
            <person name="Schobel S."/>
            <person name="Town C.D."/>
        </authorList>
    </citation>
    <scope>GENOME REANNOTATION</scope>
    <source>
        <strain>cv. Columbia</strain>
    </source>
</reference>
<reference evidence="3" key="3">
    <citation type="journal article" date="2001" name="Plant Mol. Biol.">
        <title>Two large Arabidopsis thaliana gene families are homologous to the Brassica gene superfamily that encodes pollen coat proteins and the male component of the self-incompatibility response.</title>
        <authorList>
            <person name="Vanoosthuyse V."/>
            <person name="Miege C."/>
            <person name="Dumas C."/>
            <person name="Cock J.M."/>
        </authorList>
    </citation>
    <scope>IDENTIFICATION</scope>
</reference>
<reference key="4">
    <citation type="journal article" date="2005" name="Plant Physiol.">
        <title>Genome organization of more than 300 defensin-like genes in Arabidopsis.</title>
        <authorList>
            <person name="Silverstein K.A.T."/>
            <person name="Graham M.A."/>
            <person name="Paape T.D."/>
            <person name="VandenBosch K.A."/>
        </authorList>
    </citation>
    <scope>GENE FAMILY</scope>
</reference>
<comment type="subcellular location">
    <subcellularLocation>
        <location evidence="1">Secreted</location>
    </subcellularLocation>
</comment>
<comment type="similarity">
    <text evidence="3">Belongs to the DEFL family.</text>
</comment>
<protein>
    <recommendedName>
        <fullName>Putative defensin-like protein 137</fullName>
    </recommendedName>
    <alternativeName>
        <fullName>Putative low-molecular-weight cysteine-rich protein 14</fullName>
        <shortName>Protein LCR14</shortName>
    </alternativeName>
</protein>
<sequence>MKKYFQPSFVILIIFTVLVLGVVGNMSVDQKRCWATLKENNCVHDECRSMCLKKNPKGHGRCIKSSKGRIICLCGYDCP</sequence>